<accession>Q67HX0</accession>
<geneLocation type="chloroplast"/>
<reference key="1">
    <citation type="submission" date="2002-09" db="EMBL/GenBank/DDBJ databases">
        <title>Phylogenetic relationships among the major lineages of Asparagales based on a large chloroplast data set.</title>
        <authorList>
            <person name="McPherson M.A."/>
            <person name="Rai H.S."/>
            <person name="Wong W.A."/>
            <person name="Graham S.W."/>
        </authorList>
    </citation>
    <scope>NUCLEOTIDE SEQUENCE [GENOMIC DNA]</scope>
</reference>
<gene>
    <name evidence="1" type="primary">psbN</name>
</gene>
<keyword id="KW-0150">Chloroplast</keyword>
<keyword id="KW-0472">Membrane</keyword>
<keyword id="KW-0934">Plastid</keyword>
<keyword id="KW-0793">Thylakoid</keyword>
<keyword id="KW-0812">Transmembrane</keyword>
<keyword id="KW-1133">Transmembrane helix</keyword>
<evidence type="ECO:0000255" key="1">
    <source>
        <dbReference type="HAMAP-Rule" id="MF_00293"/>
    </source>
</evidence>
<protein>
    <recommendedName>
        <fullName evidence="1">Protein PsbN</fullName>
    </recommendedName>
</protein>
<feature type="chain" id="PRO_0000207955" description="Protein PsbN">
    <location>
        <begin position="1"/>
        <end position="43"/>
    </location>
</feature>
<feature type="transmembrane region" description="Helical" evidence="1">
    <location>
        <begin position="7"/>
        <end position="27"/>
    </location>
</feature>
<name>PSBN_SISMO</name>
<dbReference type="EMBL" id="AY147533">
    <property type="protein sequence ID" value="AAN32232.1"/>
    <property type="molecule type" value="Genomic_DNA"/>
</dbReference>
<dbReference type="SMR" id="Q67HX0"/>
<dbReference type="GO" id="GO:0009535">
    <property type="term" value="C:chloroplast thylakoid membrane"/>
    <property type="evidence" value="ECO:0007669"/>
    <property type="project" value="UniProtKB-SubCell"/>
</dbReference>
<dbReference type="GO" id="GO:0015979">
    <property type="term" value="P:photosynthesis"/>
    <property type="evidence" value="ECO:0007669"/>
    <property type="project" value="InterPro"/>
</dbReference>
<dbReference type="HAMAP" id="MF_00293">
    <property type="entry name" value="PSII_PsbN"/>
    <property type="match status" value="1"/>
</dbReference>
<dbReference type="InterPro" id="IPR003398">
    <property type="entry name" value="PSII_PsbN"/>
</dbReference>
<dbReference type="PANTHER" id="PTHR35326">
    <property type="entry name" value="PROTEIN PSBN"/>
    <property type="match status" value="1"/>
</dbReference>
<dbReference type="PANTHER" id="PTHR35326:SF3">
    <property type="entry name" value="PROTEIN PSBN"/>
    <property type="match status" value="1"/>
</dbReference>
<dbReference type="Pfam" id="PF02468">
    <property type="entry name" value="PsbN"/>
    <property type="match status" value="1"/>
</dbReference>
<organism>
    <name type="scientific">Sisyrinchium montanum</name>
    <name type="common">Strict blue-eyed grass</name>
    <dbReference type="NCBI Taxonomy" id="207934"/>
    <lineage>
        <taxon>Eukaryota</taxon>
        <taxon>Viridiplantae</taxon>
        <taxon>Streptophyta</taxon>
        <taxon>Embryophyta</taxon>
        <taxon>Tracheophyta</taxon>
        <taxon>Spermatophyta</taxon>
        <taxon>Magnoliopsida</taxon>
        <taxon>Liliopsida</taxon>
        <taxon>Asparagales</taxon>
        <taxon>Iridaceae</taxon>
        <taxon>Iridoideae</taxon>
        <taxon>Sisyrinchieae</taxon>
        <taxon>Sisyrinchium</taxon>
    </lineage>
</organism>
<sequence>METATLVAIFISGLLVSFTGYALYTAFGQPSQQLRDPFEEHGD</sequence>
<proteinExistence type="inferred from homology"/>
<comment type="function">
    <text evidence="1">May play a role in photosystem I and II biogenesis.</text>
</comment>
<comment type="subcellular location">
    <subcellularLocation>
        <location evidence="1">Plastid</location>
        <location evidence="1">Chloroplast thylakoid membrane</location>
        <topology evidence="1">Single-pass membrane protein</topology>
    </subcellularLocation>
</comment>
<comment type="similarity">
    <text evidence="1">Belongs to the PsbN family.</text>
</comment>
<comment type="caution">
    <text evidence="1">Originally thought to be a component of PSII; based on experiments in Synechocystis, N.tabacum and barley, and its absence from PSII in T.elongatus and T.vulcanus, this is probably not true.</text>
</comment>